<reference key="1">
    <citation type="submission" date="2005-08" db="EMBL/GenBank/DDBJ databases">
        <authorList>
            <consortium name="NIH - Mammalian Gene Collection (MGC) project"/>
        </authorList>
    </citation>
    <scope>NUCLEOTIDE SEQUENCE [LARGE SCALE MRNA]</scope>
    <source>
        <strain>Crossbred X Angus</strain>
        <tissue>Ileum</tissue>
    </source>
</reference>
<proteinExistence type="evidence at transcript level"/>
<accession>Q3ZC64</accession>
<organism>
    <name type="scientific">Bos taurus</name>
    <name type="common">Bovine</name>
    <dbReference type="NCBI Taxonomy" id="9913"/>
    <lineage>
        <taxon>Eukaryota</taxon>
        <taxon>Metazoa</taxon>
        <taxon>Chordata</taxon>
        <taxon>Craniata</taxon>
        <taxon>Vertebrata</taxon>
        <taxon>Euteleostomi</taxon>
        <taxon>Mammalia</taxon>
        <taxon>Eutheria</taxon>
        <taxon>Laurasiatheria</taxon>
        <taxon>Artiodactyla</taxon>
        <taxon>Ruminantia</taxon>
        <taxon>Pecora</taxon>
        <taxon>Bovidae</taxon>
        <taxon>Bovinae</taxon>
        <taxon>Bos</taxon>
    </lineage>
</organism>
<gene>
    <name type="primary">EFNA1</name>
</gene>
<keyword id="KW-0037">Angiogenesis</keyword>
<keyword id="KW-1003">Cell membrane</keyword>
<keyword id="KW-1015">Disulfide bond</keyword>
<keyword id="KW-0325">Glycoprotein</keyword>
<keyword id="KW-0336">GPI-anchor</keyword>
<keyword id="KW-0449">Lipoprotein</keyword>
<keyword id="KW-0472">Membrane</keyword>
<keyword id="KW-1185">Reference proteome</keyword>
<keyword id="KW-0964">Secreted</keyword>
<keyword id="KW-0732">Signal</keyword>
<keyword id="KW-0043">Tumor suppressor</keyword>
<protein>
    <recommendedName>
        <fullName>Ephrin-A1</fullName>
    </recommendedName>
    <component>
        <recommendedName>
            <fullName>Ephrin-A1, secreted form</fullName>
        </recommendedName>
    </component>
</protein>
<dbReference type="EMBL" id="BC102889">
    <property type="protein sequence ID" value="AAI02890.1"/>
    <property type="molecule type" value="mRNA"/>
</dbReference>
<dbReference type="RefSeq" id="NP_001029464.1">
    <property type="nucleotide sequence ID" value="NM_001034292.1"/>
</dbReference>
<dbReference type="SMR" id="Q3ZC64"/>
<dbReference type="FunCoup" id="Q3ZC64">
    <property type="interactions" value="736"/>
</dbReference>
<dbReference type="STRING" id="9913.ENSBTAP00000004007"/>
<dbReference type="GlyCosmos" id="Q3ZC64">
    <property type="glycosylation" value="1 site, No reported glycans"/>
</dbReference>
<dbReference type="GlyGen" id="Q3ZC64">
    <property type="glycosylation" value="1 site"/>
</dbReference>
<dbReference type="PaxDb" id="9913-ENSBTAP00000004007"/>
<dbReference type="Ensembl" id="ENSBTAT00000004007.4">
    <property type="protein sequence ID" value="ENSBTAP00000004007.3"/>
    <property type="gene ID" value="ENSBTAG00000020244.6"/>
</dbReference>
<dbReference type="GeneID" id="507319"/>
<dbReference type="KEGG" id="bta:507319"/>
<dbReference type="CTD" id="1942"/>
<dbReference type="VEuPathDB" id="HostDB:ENSBTAG00000020244"/>
<dbReference type="VGNC" id="VGNC:28355">
    <property type="gene designation" value="EFNA1"/>
</dbReference>
<dbReference type="eggNOG" id="KOG3858">
    <property type="taxonomic scope" value="Eukaryota"/>
</dbReference>
<dbReference type="GeneTree" id="ENSGT00940000159919"/>
<dbReference type="HOGENOM" id="CLU_081598_2_0_1"/>
<dbReference type="InParanoid" id="Q3ZC64"/>
<dbReference type="OMA" id="QRHTVFW"/>
<dbReference type="OrthoDB" id="8774972at2759"/>
<dbReference type="Reactome" id="R-BTA-2682334">
    <property type="pathway name" value="EPH-Ephrin signaling"/>
</dbReference>
<dbReference type="Reactome" id="R-BTA-3928663">
    <property type="pathway name" value="EPHA-mediated growth cone collapse"/>
</dbReference>
<dbReference type="Reactome" id="R-BTA-3928665">
    <property type="pathway name" value="EPH-ephrin mediated repulsion of cells"/>
</dbReference>
<dbReference type="Proteomes" id="UP000009136">
    <property type="component" value="Chromosome 3"/>
</dbReference>
<dbReference type="Bgee" id="ENSBTAG00000020244">
    <property type="expression patterns" value="Expressed in placenta and 104 other cell types or tissues"/>
</dbReference>
<dbReference type="GO" id="GO:0005576">
    <property type="term" value="C:extracellular region"/>
    <property type="evidence" value="ECO:0007669"/>
    <property type="project" value="UniProtKB-SubCell"/>
</dbReference>
<dbReference type="GO" id="GO:0005886">
    <property type="term" value="C:plasma membrane"/>
    <property type="evidence" value="ECO:0000318"/>
    <property type="project" value="GO_Central"/>
</dbReference>
<dbReference type="GO" id="GO:0098552">
    <property type="term" value="C:side of membrane"/>
    <property type="evidence" value="ECO:0007669"/>
    <property type="project" value="UniProtKB-KW"/>
</dbReference>
<dbReference type="GO" id="GO:0046875">
    <property type="term" value="F:ephrin receptor binding"/>
    <property type="evidence" value="ECO:0000318"/>
    <property type="project" value="GO_Central"/>
</dbReference>
<dbReference type="GO" id="GO:0001525">
    <property type="term" value="P:angiogenesis"/>
    <property type="evidence" value="ECO:0007669"/>
    <property type="project" value="UniProtKB-KW"/>
</dbReference>
<dbReference type="GO" id="GO:0003180">
    <property type="term" value="P:aortic valve morphogenesis"/>
    <property type="evidence" value="ECO:0007669"/>
    <property type="project" value="Ensembl"/>
</dbReference>
<dbReference type="GO" id="GO:0007411">
    <property type="term" value="P:axon guidance"/>
    <property type="evidence" value="ECO:0000318"/>
    <property type="project" value="GO_Central"/>
</dbReference>
<dbReference type="GO" id="GO:0016477">
    <property type="term" value="P:cell migration"/>
    <property type="evidence" value="ECO:0007669"/>
    <property type="project" value="Ensembl"/>
</dbReference>
<dbReference type="GO" id="GO:0021953">
    <property type="term" value="P:central nervous system neuron differentiation"/>
    <property type="evidence" value="ECO:0007669"/>
    <property type="project" value="Ensembl"/>
</dbReference>
<dbReference type="GO" id="GO:0003199">
    <property type="term" value="P:endocardial cushion to mesenchymal transition involved in heart valve formation"/>
    <property type="evidence" value="ECO:0007669"/>
    <property type="project" value="Ensembl"/>
</dbReference>
<dbReference type="GO" id="GO:0048013">
    <property type="term" value="P:ephrin receptor signaling pathway"/>
    <property type="evidence" value="ECO:0000250"/>
    <property type="project" value="UniProtKB"/>
</dbReference>
<dbReference type="GO" id="GO:0003183">
    <property type="term" value="P:mitral valve morphogenesis"/>
    <property type="evidence" value="ECO:0007669"/>
    <property type="project" value="Ensembl"/>
</dbReference>
<dbReference type="GO" id="GO:0061002">
    <property type="term" value="P:negative regulation of dendritic spine morphogenesis"/>
    <property type="evidence" value="ECO:0000250"/>
    <property type="project" value="UniProtKB"/>
</dbReference>
<dbReference type="GO" id="GO:0010719">
    <property type="term" value="P:negative regulation of epithelial to mesenchymal transition"/>
    <property type="evidence" value="ECO:0007669"/>
    <property type="project" value="Ensembl"/>
</dbReference>
<dbReference type="GO" id="GO:0043409">
    <property type="term" value="P:negative regulation of MAPK cascade"/>
    <property type="evidence" value="ECO:0007669"/>
    <property type="project" value="Ensembl"/>
</dbReference>
<dbReference type="GO" id="GO:1903051">
    <property type="term" value="P:negative regulation of proteolysis involved in protein catabolic process"/>
    <property type="evidence" value="ECO:0007669"/>
    <property type="project" value="Ensembl"/>
</dbReference>
<dbReference type="GO" id="GO:0070244">
    <property type="term" value="P:negative regulation of thymocyte apoptotic process"/>
    <property type="evidence" value="ECO:0007669"/>
    <property type="project" value="Ensembl"/>
</dbReference>
<dbReference type="GO" id="GO:0000122">
    <property type="term" value="P:negative regulation of transcription by RNA polymerase II"/>
    <property type="evidence" value="ECO:0007669"/>
    <property type="project" value="Ensembl"/>
</dbReference>
<dbReference type="GO" id="GO:0014028">
    <property type="term" value="P:notochord formation"/>
    <property type="evidence" value="ECO:0007669"/>
    <property type="project" value="Ensembl"/>
</dbReference>
<dbReference type="GO" id="GO:1902004">
    <property type="term" value="P:positive regulation of amyloid-beta formation"/>
    <property type="evidence" value="ECO:0007669"/>
    <property type="project" value="Ensembl"/>
</dbReference>
<dbReference type="GO" id="GO:0043410">
    <property type="term" value="P:positive regulation of MAPK cascade"/>
    <property type="evidence" value="ECO:0007669"/>
    <property type="project" value="Ensembl"/>
</dbReference>
<dbReference type="GO" id="GO:0050821">
    <property type="term" value="P:protein stabilization"/>
    <property type="evidence" value="ECO:0007669"/>
    <property type="project" value="Ensembl"/>
</dbReference>
<dbReference type="GO" id="GO:0045765">
    <property type="term" value="P:regulation of angiogenesis"/>
    <property type="evidence" value="ECO:0007669"/>
    <property type="project" value="Ensembl"/>
</dbReference>
<dbReference type="GO" id="GO:0050770">
    <property type="term" value="P:regulation of axonogenesis"/>
    <property type="evidence" value="ECO:0007669"/>
    <property type="project" value="Ensembl"/>
</dbReference>
<dbReference type="GO" id="GO:0043535">
    <property type="term" value="P:regulation of blood vessel endothelial cell migration"/>
    <property type="evidence" value="ECO:0007669"/>
    <property type="project" value="Ensembl"/>
</dbReference>
<dbReference type="GO" id="GO:0033628">
    <property type="term" value="P:regulation of cell adhesion mediated by integrin"/>
    <property type="evidence" value="ECO:0007669"/>
    <property type="project" value="Ensembl"/>
</dbReference>
<dbReference type="GO" id="GO:0050730">
    <property type="term" value="P:regulation of peptidyl-tyrosine phosphorylation"/>
    <property type="evidence" value="ECO:0000250"/>
    <property type="project" value="UniProtKB"/>
</dbReference>
<dbReference type="GO" id="GO:0034446">
    <property type="term" value="P:substrate adhesion-dependent cell spreading"/>
    <property type="evidence" value="ECO:0007669"/>
    <property type="project" value="Ensembl"/>
</dbReference>
<dbReference type="CDD" id="cd10425">
    <property type="entry name" value="Ephrin-A_Ectodomain"/>
    <property type="match status" value="1"/>
</dbReference>
<dbReference type="FunFam" id="2.60.40.420:FF:000017">
    <property type="entry name" value="ephrin-A1"/>
    <property type="match status" value="1"/>
</dbReference>
<dbReference type="Gene3D" id="2.60.40.420">
    <property type="entry name" value="Cupredoxins - blue copper proteins"/>
    <property type="match status" value="1"/>
</dbReference>
<dbReference type="InterPro" id="IPR008972">
    <property type="entry name" value="Cupredoxin"/>
</dbReference>
<dbReference type="InterPro" id="IPR031328">
    <property type="entry name" value="Ephrin"/>
</dbReference>
<dbReference type="InterPro" id="IPR034252">
    <property type="entry name" value="Ephrin-A_Ecto"/>
</dbReference>
<dbReference type="InterPro" id="IPR001799">
    <property type="entry name" value="Ephrin_RBD"/>
</dbReference>
<dbReference type="PANTHER" id="PTHR11304">
    <property type="entry name" value="EPHRIN"/>
    <property type="match status" value="1"/>
</dbReference>
<dbReference type="PANTHER" id="PTHR11304:SF19">
    <property type="entry name" value="EPHRIN-A1"/>
    <property type="match status" value="1"/>
</dbReference>
<dbReference type="Pfam" id="PF00812">
    <property type="entry name" value="Ephrin"/>
    <property type="match status" value="1"/>
</dbReference>
<dbReference type="PRINTS" id="PR01347">
    <property type="entry name" value="EPHRIN"/>
</dbReference>
<dbReference type="SUPFAM" id="SSF49503">
    <property type="entry name" value="Cupredoxins"/>
    <property type="match status" value="1"/>
</dbReference>
<dbReference type="PROSITE" id="PS51551">
    <property type="entry name" value="EPHRIN_RBD_2"/>
    <property type="match status" value="1"/>
</dbReference>
<comment type="function">
    <text evidence="1">Cell surface GPI-bound ligand for Eph receptors, a family of receptor tyrosine kinases which are crucial for migration, repulsion and adhesion during neuronal, vascular and epithelial development. Binds promiscuously Eph receptors residing on adjacent cells, leading to contact-dependent bidirectional signaling into neighboring cells. Plays an important role in angiogenesis and tumor neovascularization. The recruitment of VAV2, VAV3 and PI3-kinase p85 subunit by phosphorylated EPHA2 is critical for EFNA1-induced RAC1 GTPase activation and vascular endothelial cell migration and assembly. Exerts anti-oncogenic effects in tumor cells through activation and down-regulation of EPHA2. Activates EPHA2 by inducing tyrosine phosphorylation which leads to its internalization and degradation. Acts as a negative regulator in the tumorigenesis of gliomas by down-regulating EPHA2 and FAK. Can evoke collapse of embryonic neuronal growth cone and regulates dendritic spine morphogenesis (By similarity).</text>
</comment>
<comment type="subunit">
    <text evidence="1">Monomer. Homodimer. Forms heterodimers with EPHA2. Binds to the receptor tyrosine kinases EPHA2, EPHA3, EPHA4, EPHA5, EPHA6 and EPHA7. Also binds with low affinity to EPHA1 (By similarity).</text>
</comment>
<comment type="subcellular location">
    <subcellularLocation>
        <location evidence="2">Cell membrane</location>
        <topology evidence="2">Lipid-anchor</topology>
        <topology evidence="2">GPI-anchor</topology>
    </subcellularLocation>
</comment>
<comment type="subcellular location">
    <molecule>Ephrin-A1, secreted form</molecule>
    <subcellularLocation>
        <location evidence="2">Secreted</location>
    </subcellularLocation>
</comment>
<comment type="PTM">
    <text evidence="1">Undergoes proteolysis by a metalloprotease to give rise to a soluble monomeric form.</text>
</comment>
<comment type="PTM">
    <text evidence="2">N-Glycosylation is required for binding to EPHA2 receptor and inducing its internalization.</text>
</comment>
<comment type="similarity">
    <text evidence="4">Belongs to the ephrin family.</text>
</comment>
<evidence type="ECO:0000250" key="1"/>
<evidence type="ECO:0000250" key="2">
    <source>
        <dbReference type="UniProtKB" id="P20827"/>
    </source>
</evidence>
<evidence type="ECO:0000255" key="3"/>
<evidence type="ECO:0000255" key="4">
    <source>
        <dbReference type="PROSITE-ProRule" id="PRU00884"/>
    </source>
</evidence>
<sequence>MEFFWASLLGLCCSLAAANRHTVFWNSSNPKFWNEDYTVHVRIDDYLDIICPHYEDNSVPDAAMEQYTLYLVEHEQYQLCQPQPKDHARWFCKSPKAKHGPEKLSEKFHRFTGFTLSKDFKEGHSYYYISKPIHHQEDRCLRLKVMIAGKITHSPQAHPNAQEKRLPADDPEVQVLHSIGHSAAPRLFPLAWAVLLLPFLLLQIP</sequence>
<name>EFNA1_BOVIN</name>
<feature type="signal peptide" evidence="1">
    <location>
        <begin position="1"/>
        <end position="18"/>
    </location>
</feature>
<feature type="chain" id="PRO_0000282935" description="Ephrin-A1">
    <location>
        <begin position="19"/>
        <end position="182"/>
    </location>
</feature>
<feature type="chain" id="PRO_0000389629" description="Ephrin-A1, secreted form">
    <location>
        <begin position="19"/>
        <end status="unknown"/>
    </location>
</feature>
<feature type="propeptide" id="PRO_0000282936" description="Removed in mature form" evidence="3">
    <location>
        <begin position="183"/>
        <end position="205"/>
    </location>
</feature>
<feature type="domain" description="Ephrin RBD" evidence="4">
    <location>
        <begin position="19"/>
        <end position="151"/>
    </location>
</feature>
<feature type="lipid moiety-binding region" description="GPI-anchor amidated serine" evidence="3">
    <location>
        <position position="182"/>
    </location>
</feature>
<feature type="glycosylation site" description="N-linked (GlcNAc...) asparagine" evidence="3">
    <location>
        <position position="26"/>
    </location>
</feature>
<feature type="disulfide bond" evidence="4">
    <location>
        <begin position="51"/>
        <end position="92"/>
    </location>
</feature>
<feature type="disulfide bond" evidence="4">
    <location>
        <begin position="80"/>
        <end position="140"/>
    </location>
</feature>